<accession>Q87MH1</accession>
<dbReference type="EC" id="2.4.2.9" evidence="1"/>
<dbReference type="EMBL" id="BA000031">
    <property type="protein sequence ID" value="BAC60547.1"/>
    <property type="molecule type" value="Genomic_DNA"/>
</dbReference>
<dbReference type="RefSeq" id="NP_798663.1">
    <property type="nucleotide sequence ID" value="NC_004603.1"/>
</dbReference>
<dbReference type="RefSeq" id="WP_005457783.1">
    <property type="nucleotide sequence ID" value="NC_004603.1"/>
</dbReference>
<dbReference type="SMR" id="Q87MH1"/>
<dbReference type="GeneID" id="1189797"/>
<dbReference type="KEGG" id="vpa:VP2284"/>
<dbReference type="PATRIC" id="fig|223926.6.peg.2186"/>
<dbReference type="eggNOG" id="COG0035">
    <property type="taxonomic scope" value="Bacteria"/>
</dbReference>
<dbReference type="HOGENOM" id="CLU_067096_2_2_6"/>
<dbReference type="UniPathway" id="UPA00574">
    <property type="reaction ID" value="UER00636"/>
</dbReference>
<dbReference type="Proteomes" id="UP000002493">
    <property type="component" value="Chromosome 1"/>
</dbReference>
<dbReference type="GO" id="GO:0005525">
    <property type="term" value="F:GTP binding"/>
    <property type="evidence" value="ECO:0007669"/>
    <property type="project" value="UniProtKB-KW"/>
</dbReference>
<dbReference type="GO" id="GO:0000287">
    <property type="term" value="F:magnesium ion binding"/>
    <property type="evidence" value="ECO:0007669"/>
    <property type="project" value="UniProtKB-UniRule"/>
</dbReference>
<dbReference type="GO" id="GO:0004845">
    <property type="term" value="F:uracil phosphoribosyltransferase activity"/>
    <property type="evidence" value="ECO:0007669"/>
    <property type="project" value="UniProtKB-UniRule"/>
</dbReference>
<dbReference type="GO" id="GO:0044206">
    <property type="term" value="P:UMP salvage"/>
    <property type="evidence" value="ECO:0007669"/>
    <property type="project" value="UniProtKB-UniRule"/>
</dbReference>
<dbReference type="GO" id="GO:0006223">
    <property type="term" value="P:uracil salvage"/>
    <property type="evidence" value="ECO:0007669"/>
    <property type="project" value="InterPro"/>
</dbReference>
<dbReference type="CDD" id="cd06223">
    <property type="entry name" value="PRTases_typeI"/>
    <property type="match status" value="1"/>
</dbReference>
<dbReference type="FunFam" id="3.40.50.2020:FF:000003">
    <property type="entry name" value="Uracil phosphoribosyltransferase"/>
    <property type="match status" value="1"/>
</dbReference>
<dbReference type="Gene3D" id="3.40.50.2020">
    <property type="match status" value="1"/>
</dbReference>
<dbReference type="HAMAP" id="MF_01218_B">
    <property type="entry name" value="Upp_B"/>
    <property type="match status" value="1"/>
</dbReference>
<dbReference type="InterPro" id="IPR000836">
    <property type="entry name" value="PRibTrfase_dom"/>
</dbReference>
<dbReference type="InterPro" id="IPR029057">
    <property type="entry name" value="PRTase-like"/>
</dbReference>
<dbReference type="InterPro" id="IPR034332">
    <property type="entry name" value="Upp_B"/>
</dbReference>
<dbReference type="InterPro" id="IPR050054">
    <property type="entry name" value="UPRTase/APRTase"/>
</dbReference>
<dbReference type="InterPro" id="IPR005765">
    <property type="entry name" value="Ura_phspho_trans"/>
</dbReference>
<dbReference type="NCBIfam" id="NF001097">
    <property type="entry name" value="PRK00129.1"/>
    <property type="match status" value="1"/>
</dbReference>
<dbReference type="NCBIfam" id="TIGR01091">
    <property type="entry name" value="upp"/>
    <property type="match status" value="1"/>
</dbReference>
<dbReference type="PANTHER" id="PTHR32315">
    <property type="entry name" value="ADENINE PHOSPHORIBOSYLTRANSFERASE"/>
    <property type="match status" value="1"/>
</dbReference>
<dbReference type="PANTHER" id="PTHR32315:SF4">
    <property type="entry name" value="URACIL PHOSPHORIBOSYLTRANSFERASE, CHLOROPLASTIC"/>
    <property type="match status" value="1"/>
</dbReference>
<dbReference type="Pfam" id="PF14681">
    <property type="entry name" value="UPRTase"/>
    <property type="match status" value="1"/>
</dbReference>
<dbReference type="SUPFAM" id="SSF53271">
    <property type="entry name" value="PRTase-like"/>
    <property type="match status" value="1"/>
</dbReference>
<evidence type="ECO:0000255" key="1">
    <source>
        <dbReference type="HAMAP-Rule" id="MF_01218"/>
    </source>
</evidence>
<keyword id="KW-0021">Allosteric enzyme</keyword>
<keyword id="KW-0328">Glycosyltransferase</keyword>
<keyword id="KW-0342">GTP-binding</keyword>
<keyword id="KW-0460">Magnesium</keyword>
<keyword id="KW-0547">Nucleotide-binding</keyword>
<keyword id="KW-0808">Transferase</keyword>
<comment type="function">
    <text evidence="1">Catalyzes the conversion of uracil and 5-phospho-alpha-D-ribose 1-diphosphate (PRPP) to UMP and diphosphate.</text>
</comment>
<comment type="catalytic activity">
    <reaction evidence="1">
        <text>UMP + diphosphate = 5-phospho-alpha-D-ribose 1-diphosphate + uracil</text>
        <dbReference type="Rhea" id="RHEA:13017"/>
        <dbReference type="ChEBI" id="CHEBI:17568"/>
        <dbReference type="ChEBI" id="CHEBI:33019"/>
        <dbReference type="ChEBI" id="CHEBI:57865"/>
        <dbReference type="ChEBI" id="CHEBI:58017"/>
        <dbReference type="EC" id="2.4.2.9"/>
    </reaction>
</comment>
<comment type="cofactor">
    <cofactor evidence="1">
        <name>Mg(2+)</name>
        <dbReference type="ChEBI" id="CHEBI:18420"/>
    </cofactor>
    <text evidence="1">Binds 1 Mg(2+) ion per subunit. The magnesium is bound as Mg-PRPP.</text>
</comment>
<comment type="activity regulation">
    <text evidence="1">Allosterically activated by GTP.</text>
</comment>
<comment type="pathway">
    <text evidence="1">Pyrimidine metabolism; UMP biosynthesis via salvage pathway; UMP from uracil: step 1/1.</text>
</comment>
<comment type="similarity">
    <text evidence="1">Belongs to the UPRTase family.</text>
</comment>
<organism>
    <name type="scientific">Vibrio parahaemolyticus serotype O3:K6 (strain RIMD 2210633)</name>
    <dbReference type="NCBI Taxonomy" id="223926"/>
    <lineage>
        <taxon>Bacteria</taxon>
        <taxon>Pseudomonadati</taxon>
        <taxon>Pseudomonadota</taxon>
        <taxon>Gammaproteobacteria</taxon>
        <taxon>Vibrionales</taxon>
        <taxon>Vibrionaceae</taxon>
        <taxon>Vibrio</taxon>
    </lineage>
</organism>
<feature type="chain" id="PRO_0000120910" description="Uracil phosphoribosyltransferase">
    <location>
        <begin position="1"/>
        <end position="208"/>
    </location>
</feature>
<feature type="binding site" evidence="1">
    <location>
        <position position="78"/>
    </location>
    <ligand>
        <name>5-phospho-alpha-D-ribose 1-diphosphate</name>
        <dbReference type="ChEBI" id="CHEBI:58017"/>
    </ligand>
</feature>
<feature type="binding site" evidence="1">
    <location>
        <position position="103"/>
    </location>
    <ligand>
        <name>5-phospho-alpha-D-ribose 1-diphosphate</name>
        <dbReference type="ChEBI" id="CHEBI:58017"/>
    </ligand>
</feature>
<feature type="binding site" evidence="1">
    <location>
        <begin position="130"/>
        <end position="138"/>
    </location>
    <ligand>
        <name>5-phospho-alpha-D-ribose 1-diphosphate</name>
        <dbReference type="ChEBI" id="CHEBI:58017"/>
    </ligand>
</feature>
<feature type="binding site" evidence="1">
    <location>
        <position position="193"/>
    </location>
    <ligand>
        <name>uracil</name>
        <dbReference type="ChEBI" id="CHEBI:17568"/>
    </ligand>
</feature>
<feature type="binding site" evidence="1">
    <location>
        <begin position="198"/>
        <end position="200"/>
    </location>
    <ligand>
        <name>uracil</name>
        <dbReference type="ChEBI" id="CHEBI:17568"/>
    </ligand>
</feature>
<feature type="binding site" evidence="1">
    <location>
        <position position="199"/>
    </location>
    <ligand>
        <name>5-phospho-alpha-D-ribose 1-diphosphate</name>
        <dbReference type="ChEBI" id="CHEBI:58017"/>
    </ligand>
</feature>
<reference key="1">
    <citation type="journal article" date="2003" name="Lancet">
        <title>Genome sequence of Vibrio parahaemolyticus: a pathogenic mechanism distinct from that of V. cholerae.</title>
        <authorList>
            <person name="Makino K."/>
            <person name="Oshima K."/>
            <person name="Kurokawa K."/>
            <person name="Yokoyama K."/>
            <person name="Uda T."/>
            <person name="Tagomori K."/>
            <person name="Iijima Y."/>
            <person name="Najima M."/>
            <person name="Nakano M."/>
            <person name="Yamashita A."/>
            <person name="Kubota Y."/>
            <person name="Kimura S."/>
            <person name="Yasunaga T."/>
            <person name="Honda T."/>
            <person name="Shinagawa H."/>
            <person name="Hattori M."/>
            <person name="Iida T."/>
        </authorList>
    </citation>
    <scope>NUCLEOTIDE SEQUENCE [LARGE SCALE GENOMIC DNA]</scope>
    <source>
        <strain>RIMD 2210633</strain>
    </source>
</reference>
<protein>
    <recommendedName>
        <fullName evidence="1">Uracil phosphoribosyltransferase</fullName>
        <ecNumber evidence="1">2.4.2.9</ecNumber>
    </recommendedName>
    <alternativeName>
        <fullName evidence="1">UMP pyrophosphorylase</fullName>
    </alternativeName>
    <alternativeName>
        <fullName evidence="1">UPRTase</fullName>
    </alternativeName>
</protein>
<proteinExistence type="inferred from homology"/>
<name>UPP_VIBPA</name>
<sequence>MKVVEVKHPLVKHKIGLMREGDISTKRFRELATEVGSLLTYEATADFETEKVTIEGWNGPVEVDQIKGKKVTVVPILRAGLGMMDGVLEHMPSARISVVGIYRDEETLEPVPYFNKLASNIDERIALVVDPMLATGGSMIATIDLLKEKGCQSIKVLVLVAAPEGIEALEKAHPDVELYTAAIDEKLNDKGYIVPGLGDAGDKIFGTK</sequence>
<gene>
    <name evidence="1" type="primary">upp</name>
    <name type="ordered locus">VP2284</name>
</gene>